<feature type="chain" id="PRO_0000055551" description="Unknown protein from 2D-PAGE of fibroblasts">
    <location>
        <begin position="1"/>
        <end position="11" status="greater than"/>
    </location>
</feature>
<feature type="non-terminal residue">
    <location>
        <position position="11"/>
    </location>
</feature>
<keyword id="KW-0903">Direct protein sequencing</keyword>
<keyword id="KW-1185">Reference proteome</keyword>
<organism>
    <name type="scientific">Mus musculus</name>
    <name type="common">Mouse</name>
    <dbReference type="NCBI Taxonomy" id="10090"/>
    <lineage>
        <taxon>Eukaryota</taxon>
        <taxon>Metazoa</taxon>
        <taxon>Chordata</taxon>
        <taxon>Craniata</taxon>
        <taxon>Vertebrata</taxon>
        <taxon>Euteleostomi</taxon>
        <taxon>Mammalia</taxon>
        <taxon>Eutheria</taxon>
        <taxon>Euarchontoglires</taxon>
        <taxon>Glires</taxon>
        <taxon>Rodentia</taxon>
        <taxon>Myomorpha</taxon>
        <taxon>Muroidea</taxon>
        <taxon>Muridae</taxon>
        <taxon>Murinae</taxon>
        <taxon>Mus</taxon>
        <taxon>Mus</taxon>
    </lineage>
</organism>
<sequence length="11" mass="1330">KYIXXDDVIEL</sequence>
<name>UF05_MOUSE</name>
<accession>P38643</accession>
<comment type="miscellaneous">
    <text>On the 2D-gel the determined pI of this unknown protein is: 5.5, its MW is: 48 kDa.</text>
</comment>
<dbReference type="InParanoid" id="P38643"/>
<dbReference type="Proteomes" id="UP000000589">
    <property type="component" value="Unplaced"/>
</dbReference>
<reference key="1">
    <citation type="journal article" date="1994" name="Electrophoresis">
        <title>Separation and sequencing of familiar and novel murine proteins using preparative two-dimensional gel electrophoresis.</title>
        <authorList>
            <person name="Merrick B.A."/>
            <person name="Patterson R.M."/>
            <person name="Wichter L.L."/>
            <person name="He C."/>
            <person name="Selkirk J.K."/>
        </authorList>
    </citation>
    <scope>PROTEIN SEQUENCE</scope>
    <source>
        <tissue>Fibroblast</tissue>
    </source>
</reference>
<protein>
    <recommendedName>
        <fullName>Unknown protein from 2D-PAGE of fibroblasts</fullName>
    </recommendedName>
    <alternativeName>
        <fullName>P48</fullName>
    </alternativeName>
</protein>
<proteinExistence type="evidence at protein level"/>